<proteinExistence type="inferred from homology"/>
<feature type="chain" id="PRO_1000098588" description="Threonine--tRNA ligase">
    <location>
        <begin position="1"/>
        <end position="636"/>
    </location>
</feature>
<feature type="domain" description="TGS" evidence="2">
    <location>
        <begin position="1"/>
        <end position="61"/>
    </location>
</feature>
<feature type="region of interest" description="Catalytic" evidence="1">
    <location>
        <begin position="244"/>
        <end position="534"/>
    </location>
</feature>
<feature type="binding site" evidence="1">
    <location>
        <position position="335"/>
    </location>
    <ligand>
        <name>Zn(2+)</name>
        <dbReference type="ChEBI" id="CHEBI:29105"/>
    </ligand>
</feature>
<feature type="binding site" evidence="1">
    <location>
        <position position="386"/>
    </location>
    <ligand>
        <name>Zn(2+)</name>
        <dbReference type="ChEBI" id="CHEBI:29105"/>
    </ligand>
</feature>
<feature type="binding site" evidence="1">
    <location>
        <position position="511"/>
    </location>
    <ligand>
        <name>Zn(2+)</name>
        <dbReference type="ChEBI" id="CHEBI:29105"/>
    </ligand>
</feature>
<evidence type="ECO:0000255" key="1">
    <source>
        <dbReference type="HAMAP-Rule" id="MF_00184"/>
    </source>
</evidence>
<evidence type="ECO:0000255" key="2">
    <source>
        <dbReference type="PROSITE-ProRule" id="PRU01228"/>
    </source>
</evidence>
<gene>
    <name evidence="1" type="primary">thrS</name>
    <name type="ordered locus">Nther_1824</name>
</gene>
<keyword id="KW-0030">Aminoacyl-tRNA synthetase</keyword>
<keyword id="KW-0067">ATP-binding</keyword>
<keyword id="KW-0963">Cytoplasm</keyword>
<keyword id="KW-0436">Ligase</keyword>
<keyword id="KW-0479">Metal-binding</keyword>
<keyword id="KW-0547">Nucleotide-binding</keyword>
<keyword id="KW-0648">Protein biosynthesis</keyword>
<keyword id="KW-1185">Reference proteome</keyword>
<keyword id="KW-0694">RNA-binding</keyword>
<keyword id="KW-0820">tRNA-binding</keyword>
<keyword id="KW-0862">Zinc</keyword>
<comment type="function">
    <text evidence="1">Catalyzes the attachment of threonine to tRNA(Thr) in a two-step reaction: L-threonine is first activated by ATP to form Thr-AMP and then transferred to the acceptor end of tRNA(Thr). Also edits incorrectly charged L-seryl-tRNA(Thr).</text>
</comment>
<comment type="catalytic activity">
    <reaction evidence="1">
        <text>tRNA(Thr) + L-threonine + ATP = L-threonyl-tRNA(Thr) + AMP + diphosphate + H(+)</text>
        <dbReference type="Rhea" id="RHEA:24624"/>
        <dbReference type="Rhea" id="RHEA-COMP:9670"/>
        <dbReference type="Rhea" id="RHEA-COMP:9704"/>
        <dbReference type="ChEBI" id="CHEBI:15378"/>
        <dbReference type="ChEBI" id="CHEBI:30616"/>
        <dbReference type="ChEBI" id="CHEBI:33019"/>
        <dbReference type="ChEBI" id="CHEBI:57926"/>
        <dbReference type="ChEBI" id="CHEBI:78442"/>
        <dbReference type="ChEBI" id="CHEBI:78534"/>
        <dbReference type="ChEBI" id="CHEBI:456215"/>
        <dbReference type="EC" id="6.1.1.3"/>
    </reaction>
</comment>
<comment type="cofactor">
    <cofactor evidence="1">
        <name>Zn(2+)</name>
        <dbReference type="ChEBI" id="CHEBI:29105"/>
    </cofactor>
    <text evidence="1">Binds 1 zinc ion per subunit.</text>
</comment>
<comment type="subunit">
    <text evidence="1">Homodimer.</text>
</comment>
<comment type="subcellular location">
    <subcellularLocation>
        <location evidence="1">Cytoplasm</location>
    </subcellularLocation>
</comment>
<comment type="similarity">
    <text evidence="1">Belongs to the class-II aminoacyl-tRNA synthetase family.</text>
</comment>
<sequence length="636" mass="73550">MLKITLKDGSVKEIEKGSNVLDLAKSISNRLAKEAVGAKVDGKTVGLNKELNENCEVEILSFEDDEGCDIYRHTSSHILAHAVKRLYDNVKLGIGPPIKDGFYYDFDLEHSLSDKDLEDIKKEMKKIIKEDLPIERKVYKRDEAIEMFKEMGEDYKIELIQDLGEDEEICCYQQGDFIDLCQGPHLPSTGKIKDTALDLLKVAGAYWRGDENRAMLQRIYGTSFIKKSQLEEYIQRLEEAKKREHRKLGKELDLFSFHEEAPGSPFFHNNGMIVINELIDFWRREHRKAGYQEISTPIILNRGLWERSGHWDHFQENMYFTEIDDEDFAVKPMNCPGAMLVYNNNMYSYRDFPLRVAELGKVHRHELSGALHGLLRARSFTQDDAHIFMLPSQVEEELENVINLVDRFYSVFGFNYYVELSTKPEKAMGSDEIWDRAINALKSVLEKRGIKYIVNEGDGAFYGPKIDFQLEDAIGRSWQCSTIQLDFLLPERFDLTYIGEDGQKHRPVMIHRVIYGAIERFFALLIEHYEGKFPLWLAPRQAVIIPIADRHMEYGKDITKQLESEGIRADLDQRNEKIGYKIRDAQLKKVPYMLIVGDDEVENKTVSVRTREDGDIGSKSVAELVDEIKVEIDDMD</sequence>
<dbReference type="EC" id="6.1.1.3" evidence="1"/>
<dbReference type="EMBL" id="CP001034">
    <property type="protein sequence ID" value="ACB85396.1"/>
    <property type="molecule type" value="Genomic_DNA"/>
</dbReference>
<dbReference type="RefSeq" id="WP_012448262.1">
    <property type="nucleotide sequence ID" value="NC_010718.1"/>
</dbReference>
<dbReference type="SMR" id="B2A5P2"/>
<dbReference type="FunCoup" id="B2A5P2">
    <property type="interactions" value="405"/>
</dbReference>
<dbReference type="STRING" id="457570.Nther_1824"/>
<dbReference type="KEGG" id="nth:Nther_1824"/>
<dbReference type="eggNOG" id="COG0441">
    <property type="taxonomic scope" value="Bacteria"/>
</dbReference>
<dbReference type="HOGENOM" id="CLU_008554_0_1_9"/>
<dbReference type="InParanoid" id="B2A5P2"/>
<dbReference type="OrthoDB" id="9802304at2"/>
<dbReference type="Proteomes" id="UP000001683">
    <property type="component" value="Chromosome"/>
</dbReference>
<dbReference type="GO" id="GO:0005737">
    <property type="term" value="C:cytoplasm"/>
    <property type="evidence" value="ECO:0007669"/>
    <property type="project" value="UniProtKB-SubCell"/>
</dbReference>
<dbReference type="GO" id="GO:0005524">
    <property type="term" value="F:ATP binding"/>
    <property type="evidence" value="ECO:0007669"/>
    <property type="project" value="UniProtKB-UniRule"/>
</dbReference>
<dbReference type="GO" id="GO:0140096">
    <property type="term" value="F:catalytic activity, acting on a protein"/>
    <property type="evidence" value="ECO:0007669"/>
    <property type="project" value="UniProtKB-ARBA"/>
</dbReference>
<dbReference type="GO" id="GO:0046872">
    <property type="term" value="F:metal ion binding"/>
    <property type="evidence" value="ECO:0007669"/>
    <property type="project" value="UniProtKB-KW"/>
</dbReference>
<dbReference type="GO" id="GO:0004829">
    <property type="term" value="F:threonine-tRNA ligase activity"/>
    <property type="evidence" value="ECO:0007669"/>
    <property type="project" value="UniProtKB-UniRule"/>
</dbReference>
<dbReference type="GO" id="GO:0016740">
    <property type="term" value="F:transferase activity"/>
    <property type="evidence" value="ECO:0007669"/>
    <property type="project" value="UniProtKB-ARBA"/>
</dbReference>
<dbReference type="GO" id="GO:0000049">
    <property type="term" value="F:tRNA binding"/>
    <property type="evidence" value="ECO:0007669"/>
    <property type="project" value="UniProtKB-KW"/>
</dbReference>
<dbReference type="GO" id="GO:0006435">
    <property type="term" value="P:threonyl-tRNA aminoacylation"/>
    <property type="evidence" value="ECO:0007669"/>
    <property type="project" value="UniProtKB-UniRule"/>
</dbReference>
<dbReference type="CDD" id="cd01667">
    <property type="entry name" value="TGS_ThrRS"/>
    <property type="match status" value="1"/>
</dbReference>
<dbReference type="CDD" id="cd00860">
    <property type="entry name" value="ThrRS_anticodon"/>
    <property type="match status" value="1"/>
</dbReference>
<dbReference type="CDD" id="cd00771">
    <property type="entry name" value="ThrRS_core"/>
    <property type="match status" value="1"/>
</dbReference>
<dbReference type="FunFam" id="3.30.54.20:FF:000002">
    <property type="entry name" value="Threonine--tRNA ligase"/>
    <property type="match status" value="1"/>
</dbReference>
<dbReference type="FunFam" id="3.30.930.10:FF:000002">
    <property type="entry name" value="Threonine--tRNA ligase"/>
    <property type="match status" value="1"/>
</dbReference>
<dbReference type="FunFam" id="3.40.50.800:FF:000001">
    <property type="entry name" value="Threonine--tRNA ligase"/>
    <property type="match status" value="1"/>
</dbReference>
<dbReference type="FunFam" id="3.30.980.10:FF:000005">
    <property type="entry name" value="Threonyl-tRNA synthetase, mitochondrial"/>
    <property type="match status" value="1"/>
</dbReference>
<dbReference type="Gene3D" id="3.10.20.30">
    <property type="match status" value="1"/>
</dbReference>
<dbReference type="Gene3D" id="3.30.54.20">
    <property type="match status" value="1"/>
</dbReference>
<dbReference type="Gene3D" id="3.40.50.800">
    <property type="entry name" value="Anticodon-binding domain"/>
    <property type="match status" value="1"/>
</dbReference>
<dbReference type="Gene3D" id="3.30.930.10">
    <property type="entry name" value="Bira Bifunctional Protein, Domain 2"/>
    <property type="match status" value="1"/>
</dbReference>
<dbReference type="Gene3D" id="3.30.980.10">
    <property type="entry name" value="Threonyl-trna Synthetase, Chain A, domain 2"/>
    <property type="match status" value="1"/>
</dbReference>
<dbReference type="HAMAP" id="MF_00184">
    <property type="entry name" value="Thr_tRNA_synth"/>
    <property type="match status" value="1"/>
</dbReference>
<dbReference type="InterPro" id="IPR002314">
    <property type="entry name" value="aa-tRNA-synt_IIb"/>
</dbReference>
<dbReference type="InterPro" id="IPR006195">
    <property type="entry name" value="aa-tRNA-synth_II"/>
</dbReference>
<dbReference type="InterPro" id="IPR045864">
    <property type="entry name" value="aa-tRNA-synth_II/BPL/LPL"/>
</dbReference>
<dbReference type="InterPro" id="IPR004154">
    <property type="entry name" value="Anticodon-bd"/>
</dbReference>
<dbReference type="InterPro" id="IPR036621">
    <property type="entry name" value="Anticodon-bd_dom_sf"/>
</dbReference>
<dbReference type="InterPro" id="IPR012675">
    <property type="entry name" value="Beta-grasp_dom_sf"/>
</dbReference>
<dbReference type="InterPro" id="IPR004095">
    <property type="entry name" value="TGS"/>
</dbReference>
<dbReference type="InterPro" id="IPR012676">
    <property type="entry name" value="TGS-like"/>
</dbReference>
<dbReference type="InterPro" id="IPR002320">
    <property type="entry name" value="Thr-tRNA-ligase_IIa"/>
</dbReference>
<dbReference type="InterPro" id="IPR018163">
    <property type="entry name" value="Thr/Ala-tRNA-synth_IIc_edit"/>
</dbReference>
<dbReference type="InterPro" id="IPR047246">
    <property type="entry name" value="ThrRS_anticodon"/>
</dbReference>
<dbReference type="InterPro" id="IPR033728">
    <property type="entry name" value="ThrRS_core"/>
</dbReference>
<dbReference type="InterPro" id="IPR012947">
    <property type="entry name" value="tRNA_SAD"/>
</dbReference>
<dbReference type="NCBIfam" id="TIGR00418">
    <property type="entry name" value="thrS"/>
    <property type="match status" value="1"/>
</dbReference>
<dbReference type="PANTHER" id="PTHR11451:SF44">
    <property type="entry name" value="THREONINE--TRNA LIGASE, CHLOROPLASTIC_MITOCHONDRIAL 2"/>
    <property type="match status" value="1"/>
</dbReference>
<dbReference type="PANTHER" id="PTHR11451">
    <property type="entry name" value="THREONINE-TRNA LIGASE"/>
    <property type="match status" value="1"/>
</dbReference>
<dbReference type="Pfam" id="PF03129">
    <property type="entry name" value="HGTP_anticodon"/>
    <property type="match status" value="1"/>
</dbReference>
<dbReference type="Pfam" id="PF02824">
    <property type="entry name" value="TGS"/>
    <property type="match status" value="1"/>
</dbReference>
<dbReference type="Pfam" id="PF00587">
    <property type="entry name" value="tRNA-synt_2b"/>
    <property type="match status" value="1"/>
</dbReference>
<dbReference type="Pfam" id="PF07973">
    <property type="entry name" value="tRNA_SAD"/>
    <property type="match status" value="1"/>
</dbReference>
<dbReference type="PRINTS" id="PR01047">
    <property type="entry name" value="TRNASYNTHTHR"/>
</dbReference>
<dbReference type="SMART" id="SM00863">
    <property type="entry name" value="tRNA_SAD"/>
    <property type="match status" value="1"/>
</dbReference>
<dbReference type="SUPFAM" id="SSF52954">
    <property type="entry name" value="Class II aaRS ABD-related"/>
    <property type="match status" value="1"/>
</dbReference>
<dbReference type="SUPFAM" id="SSF55681">
    <property type="entry name" value="Class II aaRS and biotin synthetases"/>
    <property type="match status" value="1"/>
</dbReference>
<dbReference type="SUPFAM" id="SSF81271">
    <property type="entry name" value="TGS-like"/>
    <property type="match status" value="1"/>
</dbReference>
<dbReference type="SUPFAM" id="SSF55186">
    <property type="entry name" value="ThrRS/AlaRS common domain"/>
    <property type="match status" value="1"/>
</dbReference>
<dbReference type="PROSITE" id="PS50862">
    <property type="entry name" value="AA_TRNA_LIGASE_II"/>
    <property type="match status" value="1"/>
</dbReference>
<dbReference type="PROSITE" id="PS51880">
    <property type="entry name" value="TGS"/>
    <property type="match status" value="1"/>
</dbReference>
<name>SYT_NATTJ</name>
<organism>
    <name type="scientific">Natranaerobius thermophilus (strain ATCC BAA-1301 / DSM 18059 / JW/NM-WN-LF)</name>
    <dbReference type="NCBI Taxonomy" id="457570"/>
    <lineage>
        <taxon>Bacteria</taxon>
        <taxon>Bacillati</taxon>
        <taxon>Bacillota</taxon>
        <taxon>Clostridia</taxon>
        <taxon>Natranaerobiales</taxon>
        <taxon>Natranaerobiaceae</taxon>
        <taxon>Natranaerobius</taxon>
    </lineage>
</organism>
<protein>
    <recommendedName>
        <fullName evidence="1">Threonine--tRNA ligase</fullName>
        <ecNumber evidence="1">6.1.1.3</ecNumber>
    </recommendedName>
    <alternativeName>
        <fullName evidence="1">Threonyl-tRNA synthetase</fullName>
        <shortName evidence="1">ThrRS</shortName>
    </alternativeName>
</protein>
<accession>B2A5P2</accession>
<reference key="1">
    <citation type="submission" date="2008-04" db="EMBL/GenBank/DDBJ databases">
        <title>Complete sequence of chromosome of Natranaerobius thermophilus JW/NM-WN-LF.</title>
        <authorList>
            <consortium name="US DOE Joint Genome Institute"/>
            <person name="Copeland A."/>
            <person name="Lucas S."/>
            <person name="Lapidus A."/>
            <person name="Glavina del Rio T."/>
            <person name="Dalin E."/>
            <person name="Tice H."/>
            <person name="Bruce D."/>
            <person name="Goodwin L."/>
            <person name="Pitluck S."/>
            <person name="Chertkov O."/>
            <person name="Brettin T."/>
            <person name="Detter J.C."/>
            <person name="Han C."/>
            <person name="Kuske C.R."/>
            <person name="Schmutz J."/>
            <person name="Larimer F."/>
            <person name="Land M."/>
            <person name="Hauser L."/>
            <person name="Kyrpides N."/>
            <person name="Lykidis A."/>
            <person name="Mesbah N.M."/>
            <person name="Wiegel J."/>
        </authorList>
    </citation>
    <scope>NUCLEOTIDE SEQUENCE [LARGE SCALE GENOMIC DNA]</scope>
    <source>
        <strain>ATCC BAA-1301 / DSM 18059 / JW/NM-WN-LF</strain>
    </source>
</reference>